<gene>
    <name evidence="1" type="primary">atpB</name>
    <name type="ordered locus">ABO_2732</name>
</gene>
<feature type="chain" id="PRO_1000184274" description="ATP synthase subunit a">
    <location>
        <begin position="1"/>
        <end position="302"/>
    </location>
</feature>
<feature type="transmembrane region" description="Helical" evidence="1">
    <location>
        <begin position="61"/>
        <end position="81"/>
    </location>
</feature>
<feature type="transmembrane region" description="Helical" evidence="1">
    <location>
        <begin position="119"/>
        <end position="139"/>
    </location>
</feature>
<feature type="transmembrane region" description="Helical" evidence="1">
    <location>
        <begin position="148"/>
        <end position="168"/>
    </location>
</feature>
<feature type="transmembrane region" description="Helical" evidence="1">
    <location>
        <begin position="172"/>
        <end position="192"/>
    </location>
</feature>
<feature type="transmembrane region" description="Helical" evidence="1">
    <location>
        <begin position="214"/>
        <end position="234"/>
    </location>
</feature>
<feature type="transmembrane region" description="Helical" evidence="1">
    <location>
        <begin position="252"/>
        <end position="272"/>
    </location>
</feature>
<feature type="transmembrane region" description="Helical" evidence="1">
    <location>
        <begin position="273"/>
        <end position="293"/>
    </location>
</feature>
<reference key="1">
    <citation type="journal article" date="2006" name="Nat. Biotechnol.">
        <title>Genome sequence of the ubiquitous hydrocarbon-degrading marine bacterium Alcanivorax borkumensis.</title>
        <authorList>
            <person name="Schneiker S."/>
            <person name="Martins dos Santos V.A.P."/>
            <person name="Bartels D."/>
            <person name="Bekel T."/>
            <person name="Brecht M."/>
            <person name="Buhrmester J."/>
            <person name="Chernikova T.N."/>
            <person name="Denaro R."/>
            <person name="Ferrer M."/>
            <person name="Gertler C."/>
            <person name="Goesmann A."/>
            <person name="Golyshina O.V."/>
            <person name="Kaminski F."/>
            <person name="Khachane A.N."/>
            <person name="Lang S."/>
            <person name="Linke B."/>
            <person name="McHardy A.C."/>
            <person name="Meyer F."/>
            <person name="Nechitaylo T."/>
            <person name="Puehler A."/>
            <person name="Regenhardt D."/>
            <person name="Rupp O."/>
            <person name="Sabirova J.S."/>
            <person name="Selbitschka W."/>
            <person name="Yakimov M.M."/>
            <person name="Timmis K.N."/>
            <person name="Vorhoelter F.-J."/>
            <person name="Weidner S."/>
            <person name="Kaiser O."/>
            <person name="Golyshin P.N."/>
        </authorList>
    </citation>
    <scope>NUCLEOTIDE SEQUENCE [LARGE SCALE GENOMIC DNA]</scope>
    <source>
        <strain>ATCC 700651 / DSM 11573 / NCIMB 13689 / SK2</strain>
    </source>
</reference>
<organism>
    <name type="scientific">Alcanivorax borkumensis (strain ATCC 700651 / DSM 11573 / NCIMB 13689 / SK2)</name>
    <dbReference type="NCBI Taxonomy" id="393595"/>
    <lineage>
        <taxon>Bacteria</taxon>
        <taxon>Pseudomonadati</taxon>
        <taxon>Pseudomonadota</taxon>
        <taxon>Gammaproteobacteria</taxon>
        <taxon>Oceanospirillales</taxon>
        <taxon>Alcanivoracaceae</taxon>
        <taxon>Alcanivorax</taxon>
    </lineage>
</organism>
<name>ATP6_ALCBS</name>
<comment type="function">
    <text evidence="1">Key component of the proton channel; it plays a direct role in the translocation of protons across the membrane.</text>
</comment>
<comment type="subunit">
    <text evidence="1">F-type ATPases have 2 components, CF(1) - the catalytic core - and CF(0) - the membrane proton channel. CF(1) has five subunits: alpha(3), beta(3), gamma(1), delta(1), epsilon(1). CF(0) has three main subunits: a(1), b(2) and c(9-12). The alpha and beta chains form an alternating ring which encloses part of the gamma chain. CF(1) is attached to CF(0) by a central stalk formed by the gamma and epsilon chains, while a peripheral stalk is formed by the delta and b chains.</text>
</comment>
<comment type="subcellular location">
    <subcellularLocation>
        <location evidence="1">Cell inner membrane</location>
        <topology evidence="1">Multi-pass membrane protein</topology>
    </subcellularLocation>
</comment>
<comment type="similarity">
    <text evidence="1">Belongs to the ATPase A chain family.</text>
</comment>
<keyword id="KW-0066">ATP synthesis</keyword>
<keyword id="KW-0997">Cell inner membrane</keyword>
<keyword id="KW-1003">Cell membrane</keyword>
<keyword id="KW-0138">CF(0)</keyword>
<keyword id="KW-0375">Hydrogen ion transport</keyword>
<keyword id="KW-0406">Ion transport</keyword>
<keyword id="KW-0472">Membrane</keyword>
<keyword id="KW-1185">Reference proteome</keyword>
<keyword id="KW-0812">Transmembrane</keyword>
<keyword id="KW-1133">Transmembrane helix</keyword>
<keyword id="KW-0813">Transport</keyword>
<evidence type="ECO:0000255" key="1">
    <source>
        <dbReference type="HAMAP-Rule" id="MF_01393"/>
    </source>
</evidence>
<sequence>MAANSAGEYIKHHLGNLTYGKLPEGYVRECHGHAETLSQATWTMACNGTEAKDMGFAAFHVDSLAWSGGLGIIMCLLFWLGARKATAGVPSGFLNFVEIIIEFIDTQVRDSFHGKSKLIAPLSLVIFCWVFLMNLMDLIPVDFIPKTFEWVMVTFFGWSAHEAYFKIVPSTDPNITLGMSFSVMFLIIFLTIKTKGVGGFVGTLALHPFESGNPVVKALLIPINLLLETIALLAKPVSLGLRLFGNMYAGEFVFILLAAMMGTWQFIGAWPWAVFHILVITLQAFIFMVLTIVYLSMAVEEH</sequence>
<dbReference type="EMBL" id="AM286690">
    <property type="protein sequence ID" value="CAL18180.1"/>
    <property type="molecule type" value="Genomic_DNA"/>
</dbReference>
<dbReference type="RefSeq" id="WP_011590002.1">
    <property type="nucleotide sequence ID" value="NC_008260.1"/>
</dbReference>
<dbReference type="SMR" id="Q0VKW8"/>
<dbReference type="STRING" id="393595.ABO_2732"/>
<dbReference type="KEGG" id="abo:ABO_2732"/>
<dbReference type="eggNOG" id="COG0356">
    <property type="taxonomic scope" value="Bacteria"/>
</dbReference>
<dbReference type="HOGENOM" id="CLU_041018_1_0_6"/>
<dbReference type="OrthoDB" id="9789241at2"/>
<dbReference type="Proteomes" id="UP000008871">
    <property type="component" value="Chromosome"/>
</dbReference>
<dbReference type="GO" id="GO:0005886">
    <property type="term" value="C:plasma membrane"/>
    <property type="evidence" value="ECO:0007669"/>
    <property type="project" value="UniProtKB-SubCell"/>
</dbReference>
<dbReference type="GO" id="GO:0045259">
    <property type="term" value="C:proton-transporting ATP synthase complex"/>
    <property type="evidence" value="ECO:0007669"/>
    <property type="project" value="UniProtKB-KW"/>
</dbReference>
<dbReference type="GO" id="GO:0046933">
    <property type="term" value="F:proton-transporting ATP synthase activity, rotational mechanism"/>
    <property type="evidence" value="ECO:0007669"/>
    <property type="project" value="UniProtKB-UniRule"/>
</dbReference>
<dbReference type="GO" id="GO:0042777">
    <property type="term" value="P:proton motive force-driven plasma membrane ATP synthesis"/>
    <property type="evidence" value="ECO:0007669"/>
    <property type="project" value="TreeGrafter"/>
</dbReference>
<dbReference type="CDD" id="cd00310">
    <property type="entry name" value="ATP-synt_Fo_a_6"/>
    <property type="match status" value="1"/>
</dbReference>
<dbReference type="FunFam" id="1.20.120.220:FF:000002">
    <property type="entry name" value="ATP synthase subunit a"/>
    <property type="match status" value="1"/>
</dbReference>
<dbReference type="Gene3D" id="1.20.120.220">
    <property type="entry name" value="ATP synthase, F0 complex, subunit A"/>
    <property type="match status" value="1"/>
</dbReference>
<dbReference type="HAMAP" id="MF_01393">
    <property type="entry name" value="ATP_synth_a_bact"/>
    <property type="match status" value="1"/>
</dbReference>
<dbReference type="InterPro" id="IPR045082">
    <property type="entry name" value="ATP_syn_F0_a_bact/chloroplast"/>
</dbReference>
<dbReference type="InterPro" id="IPR000568">
    <property type="entry name" value="ATP_synth_F0_asu"/>
</dbReference>
<dbReference type="InterPro" id="IPR023011">
    <property type="entry name" value="ATP_synth_F0_asu_AS"/>
</dbReference>
<dbReference type="InterPro" id="IPR035908">
    <property type="entry name" value="F0_ATP_A_sf"/>
</dbReference>
<dbReference type="NCBIfam" id="TIGR01131">
    <property type="entry name" value="ATP_synt_6_or_A"/>
    <property type="match status" value="1"/>
</dbReference>
<dbReference type="NCBIfam" id="NF004477">
    <property type="entry name" value="PRK05815.1-1"/>
    <property type="match status" value="1"/>
</dbReference>
<dbReference type="PANTHER" id="PTHR42823">
    <property type="entry name" value="ATP SYNTHASE SUBUNIT A, CHLOROPLASTIC"/>
    <property type="match status" value="1"/>
</dbReference>
<dbReference type="PANTHER" id="PTHR42823:SF3">
    <property type="entry name" value="ATP SYNTHASE SUBUNIT A, CHLOROPLASTIC"/>
    <property type="match status" value="1"/>
</dbReference>
<dbReference type="Pfam" id="PF00119">
    <property type="entry name" value="ATP-synt_A"/>
    <property type="match status" value="1"/>
</dbReference>
<dbReference type="SUPFAM" id="SSF81336">
    <property type="entry name" value="F1F0 ATP synthase subunit A"/>
    <property type="match status" value="1"/>
</dbReference>
<dbReference type="PROSITE" id="PS00449">
    <property type="entry name" value="ATPASE_A"/>
    <property type="match status" value="1"/>
</dbReference>
<proteinExistence type="inferred from homology"/>
<protein>
    <recommendedName>
        <fullName evidence="1">ATP synthase subunit a</fullName>
    </recommendedName>
    <alternativeName>
        <fullName evidence="1">ATP synthase F0 sector subunit a</fullName>
    </alternativeName>
    <alternativeName>
        <fullName evidence="1">F-ATPase subunit 6</fullName>
    </alternativeName>
</protein>
<accession>Q0VKW8</accession>